<accession>Q7A883</accession>
<reference key="1">
    <citation type="journal article" date="2001" name="Lancet">
        <title>Whole genome sequencing of meticillin-resistant Staphylococcus aureus.</title>
        <authorList>
            <person name="Kuroda M."/>
            <person name="Ohta T."/>
            <person name="Uchiyama I."/>
            <person name="Baba T."/>
            <person name="Yuzawa H."/>
            <person name="Kobayashi I."/>
            <person name="Cui L."/>
            <person name="Oguchi A."/>
            <person name="Aoki K."/>
            <person name="Nagai Y."/>
            <person name="Lian J.-Q."/>
            <person name="Ito T."/>
            <person name="Kanamori M."/>
            <person name="Matsumaru H."/>
            <person name="Maruyama A."/>
            <person name="Murakami H."/>
            <person name="Hosoyama A."/>
            <person name="Mizutani-Ui Y."/>
            <person name="Takahashi N.K."/>
            <person name="Sawano T."/>
            <person name="Inoue R."/>
            <person name="Kaito C."/>
            <person name="Sekimizu K."/>
            <person name="Hirakawa H."/>
            <person name="Kuhara S."/>
            <person name="Goto S."/>
            <person name="Yabuzaki J."/>
            <person name="Kanehisa M."/>
            <person name="Yamashita A."/>
            <person name="Oshima K."/>
            <person name="Furuya K."/>
            <person name="Yoshino C."/>
            <person name="Shiba T."/>
            <person name="Hattori M."/>
            <person name="Ogasawara N."/>
            <person name="Hayashi H."/>
            <person name="Hiramatsu K."/>
        </authorList>
    </citation>
    <scope>NUCLEOTIDE SEQUENCE [LARGE SCALE GENOMIC DNA]</scope>
    <source>
        <strain>N315</strain>
    </source>
</reference>
<proteinExistence type="inferred from homology"/>
<dbReference type="EMBL" id="BA000018">
    <property type="protein sequence ID" value="BAB41315.1"/>
    <property type="molecule type" value="Genomic_DNA"/>
</dbReference>
<dbReference type="PIR" id="H89769">
    <property type="entry name" value="H89769"/>
</dbReference>
<dbReference type="SMR" id="Q7A883"/>
<dbReference type="EnsemblBacteria" id="BAB41315">
    <property type="protein sequence ID" value="BAB41315"/>
    <property type="gene ID" value="BAB41315"/>
</dbReference>
<dbReference type="KEGG" id="sau:SA0096"/>
<dbReference type="HOGENOM" id="CLU_071589_0_1_9"/>
<dbReference type="GO" id="GO:0005886">
    <property type="term" value="C:plasma membrane"/>
    <property type="evidence" value="ECO:0007669"/>
    <property type="project" value="UniProtKB-SubCell"/>
</dbReference>
<dbReference type="Gene3D" id="2.50.20.40">
    <property type="match status" value="1"/>
</dbReference>
<dbReference type="InterPro" id="IPR007595">
    <property type="entry name" value="Csa"/>
</dbReference>
<dbReference type="InterPro" id="IPR038641">
    <property type="entry name" value="Csa_sf"/>
</dbReference>
<dbReference type="NCBIfam" id="TIGR01742">
    <property type="entry name" value="SA_tandem_lipo"/>
    <property type="match status" value="1"/>
</dbReference>
<dbReference type="Pfam" id="PF04507">
    <property type="entry name" value="DUF576"/>
    <property type="match status" value="1"/>
</dbReference>
<dbReference type="PROSITE" id="PS51257">
    <property type="entry name" value="PROKAR_LIPOPROTEIN"/>
    <property type="match status" value="1"/>
</dbReference>
<evidence type="ECO:0000255" key="1">
    <source>
        <dbReference type="PROSITE-ProRule" id="PRU00303"/>
    </source>
</evidence>
<evidence type="ECO:0000305" key="2"/>
<comment type="subcellular location">
    <subcellularLocation>
        <location evidence="1">Cell membrane</location>
        <topology evidence="1">Lipid-anchor</topology>
    </subcellularLocation>
</comment>
<comment type="similarity">
    <text evidence="2">Belongs to the staphylococcal tandem lipoprotein family.</text>
</comment>
<sequence length="255" mass="29488">MKRLNKLVLYISFLILVISFTAGCGMGKEAEIKKSFEKTLSMYPIKNLEDLYDKEGYRDDQFDKNDKGTWIINSEMVVQPKGERMKSKGMVLYMNRNTKTTTGKYIVSETLHDEDGRPKSKDKEYPVKMVDNKIIPTKGIKDENIKKEIENFKFFAQYGSFKDLSKYKDGDISYNPEVPSYSAKYQLTNDDYNVKQLRKRYKIPTNKAPKLLLKGSGDLKGSSVGYKDIEFTFVEKKGENTFFTDSLHLEPSEDK</sequence>
<feature type="signal peptide" evidence="1">
    <location>
        <begin position="1"/>
        <end position="23"/>
    </location>
</feature>
<feature type="chain" id="PRO_0000282136" description="Uncharacterized lipoprotein SA0096">
    <location>
        <begin position="24"/>
        <end position="255"/>
    </location>
</feature>
<feature type="lipid moiety-binding region" description="N-palmitoyl cysteine" evidence="1">
    <location>
        <position position="24"/>
    </location>
</feature>
<feature type="lipid moiety-binding region" description="S-diacylglycerol cysteine" evidence="1">
    <location>
        <position position="24"/>
    </location>
</feature>
<organism>
    <name type="scientific">Staphylococcus aureus (strain N315)</name>
    <dbReference type="NCBI Taxonomy" id="158879"/>
    <lineage>
        <taxon>Bacteria</taxon>
        <taxon>Bacillati</taxon>
        <taxon>Bacillota</taxon>
        <taxon>Bacilli</taxon>
        <taxon>Bacillales</taxon>
        <taxon>Staphylococcaceae</taxon>
        <taxon>Staphylococcus</taxon>
    </lineage>
</organism>
<name>Y096_STAAN</name>
<gene>
    <name type="ordered locus">SA0096</name>
</gene>
<protein>
    <recommendedName>
        <fullName>Uncharacterized lipoprotein SA0096</fullName>
    </recommendedName>
</protein>
<keyword id="KW-1003">Cell membrane</keyword>
<keyword id="KW-0449">Lipoprotein</keyword>
<keyword id="KW-0472">Membrane</keyword>
<keyword id="KW-0564">Palmitate</keyword>
<keyword id="KW-0732">Signal</keyword>